<reference key="1">
    <citation type="submission" date="2011-10" db="EMBL/GenBank/DDBJ databases">
        <authorList>
            <consortium name="Soft-shell turtle genome consortium"/>
        </authorList>
    </citation>
    <scope>NUCLEOTIDE SEQUENCE [LARGE SCALE GENOMIC DNA]</scope>
</reference>
<comment type="function">
    <text evidence="3">This is one of the three pore-forming subunits of the heterotrimeric epithelial sodium channel (ENaC), a critical regulator of sodium balance and fluid homeostasis. ENaC operates in epithelial tissues, where it mediates the electrodiffusion of sodium ions from extracellular fluid through the apical membrane of cells, with water following osmotically.</text>
</comment>
<comment type="catalytic activity">
    <reaction evidence="1">
        <text>Na(+)(in) = Na(+)(out)</text>
        <dbReference type="Rhea" id="RHEA:34963"/>
        <dbReference type="ChEBI" id="CHEBI:29101"/>
    </reaction>
</comment>
<comment type="activity regulation">
    <text evidence="1">Originally identified and characterized by its inhibition by the diuretic drug amiloride.</text>
</comment>
<comment type="subunit">
    <text evidence="1">Heterotrimer; disulfide-linked and containing an alpha/SCNN1A, a beta/SCNN1B and a gamma/SCNN1G subunit.</text>
</comment>
<comment type="subcellular location">
    <subcellularLocation>
        <location evidence="2">Apical cell membrane</location>
        <topology evidence="2">Multi-pass membrane protein</topology>
    </subcellularLocation>
    <subcellularLocation>
        <location evidence="1">Cell projection</location>
        <location evidence="1">Cilium</location>
    </subcellularLocation>
    <subcellularLocation>
        <location evidence="1">Cytoplasmic granule</location>
    </subcellularLocation>
    <subcellularLocation>
        <location evidence="1">Cytoplasm</location>
    </subcellularLocation>
    <subcellularLocation>
        <location evidence="2">Cytoplasmic vesicle</location>
        <location evidence="2">Secretory vesicle</location>
        <location evidence="2">Acrosome</location>
    </subcellularLocation>
    <subcellularLocation>
        <location evidence="2">Cell projection</location>
        <location evidence="2">Cilium</location>
        <location evidence="2">Flagellum</location>
    </subcellularLocation>
</comment>
<comment type="similarity">
    <text evidence="6">Belongs to the amiloride-sensitive sodium channel (TC 1.A.6) family. SCNN1A subfamily.</text>
</comment>
<name>SCNNA_PELSI</name>
<dbReference type="EMBL" id="AGCU01093992">
    <property type="status" value="NOT_ANNOTATED_CDS"/>
    <property type="molecule type" value="Genomic_DNA"/>
</dbReference>
<dbReference type="EMBL" id="AGCU01093993">
    <property type="status" value="NOT_ANNOTATED_CDS"/>
    <property type="molecule type" value="Genomic_DNA"/>
</dbReference>
<dbReference type="EMBL" id="AGCU01093994">
    <property type="status" value="NOT_ANNOTATED_CDS"/>
    <property type="molecule type" value="Genomic_DNA"/>
</dbReference>
<dbReference type="RefSeq" id="XP_006124236.1">
    <property type="nucleotide sequence ID" value="XM_006124174.2"/>
</dbReference>
<dbReference type="SMR" id="K7GET2"/>
<dbReference type="STRING" id="13735.ENSPSIP00000018793"/>
<dbReference type="Ensembl" id="ENSPSIT00000018879.1">
    <property type="protein sequence ID" value="ENSPSIP00000018793.1"/>
    <property type="gene ID" value="ENSPSIG00000016541.1"/>
</dbReference>
<dbReference type="GeneID" id="102458615"/>
<dbReference type="KEGG" id="pss:102458615"/>
<dbReference type="CTD" id="6337"/>
<dbReference type="eggNOG" id="KOG4294">
    <property type="taxonomic scope" value="Eukaryota"/>
</dbReference>
<dbReference type="GeneTree" id="ENSGT00940000160952"/>
<dbReference type="HOGENOM" id="CLU_020415_0_0_1"/>
<dbReference type="OMA" id="MRQCKQE"/>
<dbReference type="OrthoDB" id="6238402at2759"/>
<dbReference type="TreeFam" id="TF330663"/>
<dbReference type="Proteomes" id="UP000007267">
    <property type="component" value="Unassembled WGS sequence"/>
</dbReference>
<dbReference type="GO" id="GO:0001669">
    <property type="term" value="C:acrosomal vesicle"/>
    <property type="evidence" value="ECO:0007669"/>
    <property type="project" value="UniProtKB-SubCell"/>
</dbReference>
<dbReference type="GO" id="GO:0016324">
    <property type="term" value="C:apical plasma membrane"/>
    <property type="evidence" value="ECO:0000250"/>
    <property type="project" value="UniProtKB"/>
</dbReference>
<dbReference type="GO" id="GO:0060170">
    <property type="term" value="C:ciliary membrane"/>
    <property type="evidence" value="ECO:0007669"/>
    <property type="project" value="Ensembl"/>
</dbReference>
<dbReference type="GO" id="GO:0005737">
    <property type="term" value="C:cytoplasm"/>
    <property type="evidence" value="ECO:0000250"/>
    <property type="project" value="UniProtKB"/>
</dbReference>
<dbReference type="GO" id="GO:0070062">
    <property type="term" value="C:extracellular exosome"/>
    <property type="evidence" value="ECO:0007669"/>
    <property type="project" value="Ensembl"/>
</dbReference>
<dbReference type="GO" id="GO:0031514">
    <property type="term" value="C:motile cilium"/>
    <property type="evidence" value="ECO:0007669"/>
    <property type="project" value="UniProtKB-SubCell"/>
</dbReference>
<dbReference type="GO" id="GO:0034706">
    <property type="term" value="C:sodium channel complex"/>
    <property type="evidence" value="ECO:0000250"/>
    <property type="project" value="UniProtKB"/>
</dbReference>
<dbReference type="GO" id="GO:0015280">
    <property type="term" value="F:ligand-gated sodium channel activity"/>
    <property type="evidence" value="ECO:0007669"/>
    <property type="project" value="InterPro"/>
</dbReference>
<dbReference type="GO" id="GO:0050699">
    <property type="term" value="F:WW domain binding"/>
    <property type="evidence" value="ECO:0007669"/>
    <property type="project" value="Ensembl"/>
</dbReference>
<dbReference type="GO" id="GO:0071468">
    <property type="term" value="P:cellular response to acidic pH"/>
    <property type="evidence" value="ECO:0007669"/>
    <property type="project" value="Ensembl"/>
</dbReference>
<dbReference type="GO" id="GO:0006883">
    <property type="term" value="P:intracellular sodium ion homeostasis"/>
    <property type="evidence" value="ECO:0007669"/>
    <property type="project" value="Ensembl"/>
</dbReference>
<dbReference type="GO" id="GO:0050891">
    <property type="term" value="P:multicellular organismal-level water homeostasis"/>
    <property type="evidence" value="ECO:0007669"/>
    <property type="project" value="Ensembl"/>
</dbReference>
<dbReference type="GO" id="GO:0098719">
    <property type="term" value="P:sodium ion import across plasma membrane"/>
    <property type="evidence" value="ECO:0007669"/>
    <property type="project" value="Ensembl"/>
</dbReference>
<dbReference type="GO" id="GO:0035725">
    <property type="term" value="P:sodium ion transmembrane transport"/>
    <property type="evidence" value="ECO:0000250"/>
    <property type="project" value="UniProtKB"/>
</dbReference>
<dbReference type="FunFam" id="2.60.470.10:FF:000002">
    <property type="entry name" value="Amiloride-sensitive sodium channel subunit alpha"/>
    <property type="match status" value="1"/>
</dbReference>
<dbReference type="FunFam" id="1.10.287.770:FF:000002">
    <property type="entry name" value="Amiloride-sensitive sodium channel subunit beta 1"/>
    <property type="match status" value="1"/>
</dbReference>
<dbReference type="Gene3D" id="2.60.470.10">
    <property type="entry name" value="Acid-sensing ion channels like domains"/>
    <property type="match status" value="1"/>
</dbReference>
<dbReference type="Gene3D" id="1.10.287.770">
    <property type="entry name" value="YojJ-like"/>
    <property type="match status" value="1"/>
</dbReference>
<dbReference type="InterPro" id="IPR001873">
    <property type="entry name" value="ENaC"/>
</dbReference>
<dbReference type="InterPro" id="IPR004724">
    <property type="entry name" value="ENaC_chordates"/>
</dbReference>
<dbReference type="InterPro" id="IPR020903">
    <property type="entry name" value="ENaC_CS"/>
</dbReference>
<dbReference type="NCBIfam" id="TIGR00859">
    <property type="entry name" value="ENaC"/>
    <property type="match status" value="1"/>
</dbReference>
<dbReference type="PANTHER" id="PTHR11690:SF124">
    <property type="entry name" value="AMILORIDE-SENSITIVE SODIUM CHANNEL SUBUNIT ALPHA"/>
    <property type="match status" value="1"/>
</dbReference>
<dbReference type="PANTHER" id="PTHR11690">
    <property type="entry name" value="AMILORIDE-SENSITIVE SODIUM CHANNEL-RELATED"/>
    <property type="match status" value="1"/>
</dbReference>
<dbReference type="Pfam" id="PF00858">
    <property type="entry name" value="ASC"/>
    <property type="match status" value="1"/>
</dbReference>
<dbReference type="PRINTS" id="PR01078">
    <property type="entry name" value="AMINACHANNEL"/>
</dbReference>
<dbReference type="PROSITE" id="PS01206">
    <property type="entry name" value="ASC"/>
    <property type="match status" value="1"/>
</dbReference>
<accession>K7GET2</accession>
<keyword id="KW-1003">Cell membrane</keyword>
<keyword id="KW-0966">Cell projection</keyword>
<keyword id="KW-0969">Cilium</keyword>
<keyword id="KW-0963">Cytoplasm</keyword>
<keyword id="KW-0968">Cytoplasmic vesicle</keyword>
<keyword id="KW-1015">Disulfide bond</keyword>
<keyword id="KW-0282">Flagellum</keyword>
<keyword id="KW-0407">Ion channel</keyword>
<keyword id="KW-0406">Ion transport</keyword>
<keyword id="KW-0472">Membrane</keyword>
<keyword id="KW-1185">Reference proteome</keyword>
<keyword id="KW-0915">Sodium</keyword>
<keyword id="KW-0894">Sodium channel</keyword>
<keyword id="KW-0739">Sodium transport</keyword>
<keyword id="KW-0812">Transmembrane</keyword>
<keyword id="KW-1133">Transmembrane helix</keyword>
<keyword id="KW-0813">Transport</keyword>
<feature type="chain" id="PRO_0000432910" description="Epithelial sodium channel subunit alpha">
    <location>
        <begin position="1"/>
        <end position="642"/>
    </location>
</feature>
<feature type="topological domain" description="Cytoplasmic" evidence="2">
    <location>
        <begin position="1"/>
        <end position="81"/>
    </location>
</feature>
<feature type="transmembrane region" description="Helical; Name=1" evidence="4">
    <location>
        <begin position="82"/>
        <end position="102"/>
    </location>
</feature>
<feature type="topological domain" description="Extracellular" evidence="2">
    <location>
        <begin position="103"/>
        <end position="553"/>
    </location>
</feature>
<feature type="transmembrane region" description="Helical; Name=2" evidence="4">
    <location>
        <begin position="554"/>
        <end position="574"/>
    </location>
</feature>
<feature type="topological domain" description="Cytoplasmic" evidence="2">
    <location>
        <begin position="575"/>
        <end position="642"/>
    </location>
</feature>
<feature type="region of interest" description="Disordered" evidence="5">
    <location>
        <begin position="170"/>
        <end position="209"/>
    </location>
</feature>
<feature type="region of interest" description="Disordered" evidence="5">
    <location>
        <begin position="587"/>
        <end position="608"/>
    </location>
</feature>
<feature type="compositionally biased region" description="Basic residues" evidence="5">
    <location>
        <begin position="178"/>
        <end position="197"/>
    </location>
</feature>
<feature type="disulfide bond" evidence="1">
    <location>
        <begin position="130"/>
        <end position="297"/>
    </location>
</feature>
<feature type="disulfide bond" evidence="1">
    <location>
        <begin position="222"/>
        <end position="229"/>
    </location>
</feature>
<feature type="disulfide bond" evidence="1">
    <location>
        <begin position="274"/>
        <end position="281"/>
    </location>
</feature>
<feature type="disulfide bond" evidence="1">
    <location>
        <begin position="385"/>
        <end position="470"/>
    </location>
</feature>
<feature type="disulfide bond" evidence="1">
    <location>
        <begin position="407"/>
        <end position="466"/>
    </location>
</feature>
<feature type="disulfide bond" evidence="1">
    <location>
        <begin position="407"/>
        <end position="447"/>
    </location>
</feature>
<feature type="disulfide bond" evidence="1">
    <location>
        <begin position="411"/>
        <end position="462"/>
    </location>
</feature>
<feature type="disulfide bond" evidence="1">
    <location>
        <begin position="420"/>
        <end position="470"/>
    </location>
</feature>
<feature type="disulfide bond" evidence="1">
    <location>
        <begin position="420"/>
        <end position="447"/>
    </location>
</feature>
<feature type="disulfide bond" evidence="1">
    <location>
        <begin position="422"/>
        <end position="436"/>
    </location>
</feature>
<evidence type="ECO:0000250" key="1">
    <source>
        <dbReference type="UniProtKB" id="P37088"/>
    </source>
</evidence>
<evidence type="ECO:0000250" key="2">
    <source>
        <dbReference type="UniProtKB" id="P37089"/>
    </source>
</evidence>
<evidence type="ECO:0000250" key="3">
    <source>
        <dbReference type="UniProtKB" id="Q61180"/>
    </source>
</evidence>
<evidence type="ECO:0000255" key="4"/>
<evidence type="ECO:0000256" key="5">
    <source>
        <dbReference type="SAM" id="MobiDB-lite"/>
    </source>
</evidence>
<evidence type="ECO:0000305" key="6"/>
<gene>
    <name evidence="1" type="primary">SCNN1A</name>
</gene>
<sequence>MHQVVTVKAEKVPMGKRLRRCKQEAENQQKVEEVAEKLEKEHEGLIEFHKSYHELFQFFCNNTTIHGAIRLVCSKRNKMKTAFWSVLFFLTFGLMYWQFGILYREYFSFPVNLNLNLNSDKLTFPAVTLCTLNPYRYSAVRKELDELDRITHQTLMDLYNYSMSQVQSNGAAQSSQKRSQRSLSHHVQRHPLRRRKRNEPVSLKGNSPPVDKSDWKIGFILCNETNEDCFHQTYSSGVDAVREWYSFHYINILARMPDTKALDESNFESFIYACRFNEVTCDKANYTHFHHPLYGNCYTFNDRNNSLWTSSLPGINNGLSLLVRTEQNDYIPLLSTVTGARVMVHEQNEPAFMDDGGFNVRPGIETSISMRKETTMLLGGSYSDCTEDGSDVPVQNLYSSRYTEQVCIRSCFQIHMVKRCGCAYYFYPLPPGAEYCDYTKHIAWGYCYYKLQVEFKSNILGCFSKCRKPCEVTKYQLSAGYSHWPSAVSENWVFHILSQQNKYNITSKRNGVAKVNIFFEEWKYKTNGESPAFTVVTLLSQLGNQWSLWFGSSVLSVVELAELILDFIAITIILSFKRFRSRQVPAPSVPPPGAHDNTAFQSEPADPSAPHRFTVEAVVTTLPSYNSLEPCRRDGEAVIGLE</sequence>
<proteinExistence type="inferred from homology"/>
<organism>
    <name type="scientific">Pelodiscus sinensis</name>
    <name type="common">Chinese softshell turtle</name>
    <name type="synonym">Trionyx sinensis</name>
    <dbReference type="NCBI Taxonomy" id="13735"/>
    <lineage>
        <taxon>Eukaryota</taxon>
        <taxon>Metazoa</taxon>
        <taxon>Chordata</taxon>
        <taxon>Craniata</taxon>
        <taxon>Vertebrata</taxon>
        <taxon>Euteleostomi</taxon>
        <taxon>Archelosauria</taxon>
        <taxon>Testudinata</taxon>
        <taxon>Testudines</taxon>
        <taxon>Cryptodira</taxon>
        <taxon>Trionychia</taxon>
        <taxon>Trionychidae</taxon>
        <taxon>Pelodiscus</taxon>
    </lineage>
</organism>
<protein>
    <recommendedName>
        <fullName evidence="1">Epithelial sodium channel subunit alpha</fullName>
    </recommendedName>
    <alternativeName>
        <fullName evidence="1">Amiloride-sensitive sodium channel subunit alpha</fullName>
    </alternativeName>
</protein>